<keyword id="KW-0030">Aminoacyl-tRNA synthetase</keyword>
<keyword id="KW-0067">ATP-binding</keyword>
<keyword id="KW-0963">Cytoplasm</keyword>
<keyword id="KW-0436">Ligase</keyword>
<keyword id="KW-0547">Nucleotide-binding</keyword>
<keyword id="KW-0648">Protein biosynthesis</keyword>
<comment type="catalytic activity">
    <reaction evidence="1">
        <text>tRNA(His) + L-histidine + ATP = L-histidyl-tRNA(His) + AMP + diphosphate + H(+)</text>
        <dbReference type="Rhea" id="RHEA:17313"/>
        <dbReference type="Rhea" id="RHEA-COMP:9665"/>
        <dbReference type="Rhea" id="RHEA-COMP:9689"/>
        <dbReference type="ChEBI" id="CHEBI:15378"/>
        <dbReference type="ChEBI" id="CHEBI:30616"/>
        <dbReference type="ChEBI" id="CHEBI:33019"/>
        <dbReference type="ChEBI" id="CHEBI:57595"/>
        <dbReference type="ChEBI" id="CHEBI:78442"/>
        <dbReference type="ChEBI" id="CHEBI:78527"/>
        <dbReference type="ChEBI" id="CHEBI:456215"/>
        <dbReference type="EC" id="6.1.1.21"/>
    </reaction>
</comment>
<comment type="subunit">
    <text evidence="1">Homodimer.</text>
</comment>
<comment type="subcellular location">
    <subcellularLocation>
        <location evidence="1">Cytoplasm</location>
    </subcellularLocation>
</comment>
<comment type="similarity">
    <text evidence="1">Belongs to the class-II aminoacyl-tRNA synthetase family.</text>
</comment>
<dbReference type="EC" id="6.1.1.21" evidence="1"/>
<dbReference type="EMBL" id="BX897699">
    <property type="protein sequence ID" value="CAF28134.1"/>
    <property type="molecule type" value="Genomic_DNA"/>
</dbReference>
<dbReference type="RefSeq" id="WP_011181157.1">
    <property type="nucleotide sequence ID" value="NZ_LRIJ02000001.1"/>
</dbReference>
<dbReference type="SMR" id="Q6G289"/>
<dbReference type="PaxDb" id="283166-BH13610"/>
<dbReference type="EnsemblBacteria" id="CAF28134">
    <property type="protein sequence ID" value="CAF28134"/>
    <property type="gene ID" value="BH13610"/>
</dbReference>
<dbReference type="GeneID" id="92985973"/>
<dbReference type="KEGG" id="bhe:BH13610"/>
<dbReference type="eggNOG" id="COG0124">
    <property type="taxonomic scope" value="Bacteria"/>
</dbReference>
<dbReference type="OrthoDB" id="9800814at2"/>
<dbReference type="Proteomes" id="UP000000421">
    <property type="component" value="Chromosome"/>
</dbReference>
<dbReference type="GO" id="GO:0005737">
    <property type="term" value="C:cytoplasm"/>
    <property type="evidence" value="ECO:0007669"/>
    <property type="project" value="UniProtKB-SubCell"/>
</dbReference>
<dbReference type="GO" id="GO:0005524">
    <property type="term" value="F:ATP binding"/>
    <property type="evidence" value="ECO:0007669"/>
    <property type="project" value="UniProtKB-UniRule"/>
</dbReference>
<dbReference type="GO" id="GO:0004821">
    <property type="term" value="F:histidine-tRNA ligase activity"/>
    <property type="evidence" value="ECO:0007669"/>
    <property type="project" value="UniProtKB-UniRule"/>
</dbReference>
<dbReference type="GO" id="GO:0006427">
    <property type="term" value="P:histidyl-tRNA aminoacylation"/>
    <property type="evidence" value="ECO:0007669"/>
    <property type="project" value="UniProtKB-UniRule"/>
</dbReference>
<dbReference type="CDD" id="cd00773">
    <property type="entry name" value="HisRS-like_core"/>
    <property type="match status" value="1"/>
</dbReference>
<dbReference type="CDD" id="cd00859">
    <property type="entry name" value="HisRS_anticodon"/>
    <property type="match status" value="1"/>
</dbReference>
<dbReference type="Gene3D" id="3.40.50.800">
    <property type="entry name" value="Anticodon-binding domain"/>
    <property type="match status" value="1"/>
</dbReference>
<dbReference type="Gene3D" id="3.30.930.10">
    <property type="entry name" value="Bira Bifunctional Protein, Domain 2"/>
    <property type="match status" value="1"/>
</dbReference>
<dbReference type="HAMAP" id="MF_00127">
    <property type="entry name" value="His_tRNA_synth"/>
    <property type="match status" value="1"/>
</dbReference>
<dbReference type="InterPro" id="IPR006195">
    <property type="entry name" value="aa-tRNA-synth_II"/>
</dbReference>
<dbReference type="InterPro" id="IPR045864">
    <property type="entry name" value="aa-tRNA-synth_II/BPL/LPL"/>
</dbReference>
<dbReference type="InterPro" id="IPR004154">
    <property type="entry name" value="Anticodon-bd"/>
</dbReference>
<dbReference type="InterPro" id="IPR036621">
    <property type="entry name" value="Anticodon-bd_dom_sf"/>
</dbReference>
<dbReference type="InterPro" id="IPR015807">
    <property type="entry name" value="His-tRNA-ligase"/>
</dbReference>
<dbReference type="InterPro" id="IPR041715">
    <property type="entry name" value="HisRS-like_core"/>
</dbReference>
<dbReference type="InterPro" id="IPR004516">
    <property type="entry name" value="HisRS/HisZ"/>
</dbReference>
<dbReference type="InterPro" id="IPR033656">
    <property type="entry name" value="HisRS_anticodon"/>
</dbReference>
<dbReference type="NCBIfam" id="TIGR00442">
    <property type="entry name" value="hisS"/>
    <property type="match status" value="1"/>
</dbReference>
<dbReference type="PANTHER" id="PTHR11476:SF7">
    <property type="entry name" value="HISTIDINE--TRNA LIGASE"/>
    <property type="match status" value="1"/>
</dbReference>
<dbReference type="PANTHER" id="PTHR11476">
    <property type="entry name" value="HISTIDYL-TRNA SYNTHETASE"/>
    <property type="match status" value="1"/>
</dbReference>
<dbReference type="Pfam" id="PF03129">
    <property type="entry name" value="HGTP_anticodon"/>
    <property type="match status" value="1"/>
</dbReference>
<dbReference type="Pfam" id="PF13393">
    <property type="entry name" value="tRNA-synt_His"/>
    <property type="match status" value="1"/>
</dbReference>
<dbReference type="PIRSF" id="PIRSF001549">
    <property type="entry name" value="His-tRNA_synth"/>
    <property type="match status" value="1"/>
</dbReference>
<dbReference type="SUPFAM" id="SSF52954">
    <property type="entry name" value="Class II aaRS ABD-related"/>
    <property type="match status" value="1"/>
</dbReference>
<dbReference type="SUPFAM" id="SSF55681">
    <property type="entry name" value="Class II aaRS and biotin synthetases"/>
    <property type="match status" value="1"/>
</dbReference>
<dbReference type="PROSITE" id="PS50862">
    <property type="entry name" value="AA_TRNA_LIGASE_II"/>
    <property type="match status" value="1"/>
</dbReference>
<gene>
    <name evidence="1" type="primary">hisS</name>
    <name type="ordered locus">BH13610</name>
</gene>
<evidence type="ECO:0000255" key="1">
    <source>
        <dbReference type="HAMAP-Rule" id="MF_00127"/>
    </source>
</evidence>
<proteinExistence type="inferred from homology"/>
<reference key="1">
    <citation type="journal article" date="2004" name="Proc. Natl. Acad. Sci. U.S.A.">
        <title>The louse-borne human pathogen Bartonella quintana is a genomic derivative of the zoonotic agent Bartonella henselae.</title>
        <authorList>
            <person name="Alsmark U.C.M."/>
            <person name="Frank A.C."/>
            <person name="Karlberg E.O."/>
            <person name="Legault B.-A."/>
            <person name="Ardell D.H."/>
            <person name="Canbaeck B."/>
            <person name="Eriksson A.-S."/>
            <person name="Naeslund A.K."/>
            <person name="Handley S.A."/>
            <person name="Huvet M."/>
            <person name="La Scola B."/>
            <person name="Holmberg M."/>
            <person name="Andersson S.G.E."/>
        </authorList>
    </citation>
    <scope>NUCLEOTIDE SEQUENCE [LARGE SCALE GENOMIC DNA]</scope>
    <source>
        <strain>ATCC 49882 / DSM 28221 / CCUG 30454 / Houston 1</strain>
    </source>
</reference>
<sequence length="495" mass="55479">MSSKQEKTKARLPRGFVDRTSAQLYAIEVMIAQIRQVYELYGFEALETPIFEYTDVLGKFLPDEDRPNAGVFSLQDDDEQWMSLRYDLTAPLARYFSENFETLPKPYRSYRLGFVFRNEKPGPGRFRQFMQFDADIVGTPTVAADAEICMMAADSLQKLGFQHHDYVIRLNNRKILDAVLEKVGLAGSEQAQRRLTVLRAIDKLDKFGLEGVRLLLGKGRLDESGDFTKGAELKDKEIDGILSLLTIEVGTAEETFDALRKIVDQSEEGLEGVRELEEMQAIFAENDTQNRIKIDPSVVRGLEYYTGPVFEAALLFDVLNDDGQKVVFGSVGGGGRYDGLVARFRGENIPATGFSIGVSRLIAALQNLGKLPVKEKTGPVVVLMMDKEPEIVARYQKMVMQLRSAGIPAELYLGASGMKAQMKYADRRQAPCVVIQGSQERESGTIQIKDLVEGARLSHEIKDNQTWRESRPAQVTVDEEQLVKTVQDILAAQKR</sequence>
<protein>
    <recommendedName>
        <fullName evidence="1">Histidine--tRNA ligase</fullName>
        <ecNumber evidence="1">6.1.1.21</ecNumber>
    </recommendedName>
    <alternativeName>
        <fullName evidence="1">Histidyl-tRNA synthetase</fullName>
        <shortName evidence="1">HisRS</shortName>
    </alternativeName>
</protein>
<name>SYH_BARHE</name>
<organism>
    <name type="scientific">Bartonella henselae (strain ATCC 49882 / DSM 28221 / CCUG 30454 / Houston 1)</name>
    <name type="common">Rochalimaea henselae</name>
    <dbReference type="NCBI Taxonomy" id="283166"/>
    <lineage>
        <taxon>Bacteria</taxon>
        <taxon>Pseudomonadati</taxon>
        <taxon>Pseudomonadota</taxon>
        <taxon>Alphaproteobacteria</taxon>
        <taxon>Hyphomicrobiales</taxon>
        <taxon>Bartonellaceae</taxon>
        <taxon>Bartonella</taxon>
    </lineage>
</organism>
<accession>Q6G289</accession>
<feature type="chain" id="PRO_0000136111" description="Histidine--tRNA ligase">
    <location>
        <begin position="1"/>
        <end position="495"/>
    </location>
</feature>